<organism>
    <name type="scientific">Salmonella paratyphi A (strain ATCC 9150 / SARB42)</name>
    <dbReference type="NCBI Taxonomy" id="295319"/>
    <lineage>
        <taxon>Bacteria</taxon>
        <taxon>Pseudomonadati</taxon>
        <taxon>Pseudomonadota</taxon>
        <taxon>Gammaproteobacteria</taxon>
        <taxon>Enterobacterales</taxon>
        <taxon>Enterobacteriaceae</taxon>
        <taxon>Salmonella</taxon>
    </lineage>
</organism>
<comment type="function">
    <text evidence="1">This enzyme scavenges exogenous and endogenous cytidine and 2'-deoxycytidine for UMP synthesis.</text>
</comment>
<comment type="catalytic activity">
    <reaction evidence="1">
        <text>cytidine + H2O + H(+) = uridine + NH4(+)</text>
        <dbReference type="Rhea" id="RHEA:16069"/>
        <dbReference type="ChEBI" id="CHEBI:15377"/>
        <dbReference type="ChEBI" id="CHEBI:15378"/>
        <dbReference type="ChEBI" id="CHEBI:16704"/>
        <dbReference type="ChEBI" id="CHEBI:17562"/>
        <dbReference type="ChEBI" id="CHEBI:28938"/>
        <dbReference type="EC" id="3.5.4.5"/>
    </reaction>
</comment>
<comment type="catalytic activity">
    <reaction evidence="1">
        <text>2'-deoxycytidine + H2O + H(+) = 2'-deoxyuridine + NH4(+)</text>
        <dbReference type="Rhea" id="RHEA:13433"/>
        <dbReference type="ChEBI" id="CHEBI:15377"/>
        <dbReference type="ChEBI" id="CHEBI:15378"/>
        <dbReference type="ChEBI" id="CHEBI:15698"/>
        <dbReference type="ChEBI" id="CHEBI:16450"/>
        <dbReference type="ChEBI" id="CHEBI:28938"/>
        <dbReference type="EC" id="3.5.4.5"/>
    </reaction>
</comment>
<comment type="cofactor">
    <cofactor evidence="1">
        <name>Zn(2+)</name>
        <dbReference type="ChEBI" id="CHEBI:29105"/>
    </cofactor>
    <text evidence="1">Binds 1 zinc ion.</text>
</comment>
<comment type="subunit">
    <text evidence="1">Homodimer.</text>
</comment>
<comment type="similarity">
    <text evidence="1">Belongs to the cytidine and deoxycytidylate deaminase family.</text>
</comment>
<protein>
    <recommendedName>
        <fullName evidence="1">Cytidine deaminase</fullName>
        <ecNumber evidence="1">3.5.4.5</ecNumber>
    </recommendedName>
    <alternativeName>
        <fullName evidence="1">Cytidine aminohydrolase</fullName>
        <shortName evidence="1">CDA</shortName>
    </alternativeName>
</protein>
<reference key="1">
    <citation type="journal article" date="2004" name="Nat. Genet.">
        <title>Comparison of genome degradation in Paratyphi A and Typhi, human-restricted serovars of Salmonella enterica that cause typhoid.</title>
        <authorList>
            <person name="McClelland M."/>
            <person name="Sanderson K.E."/>
            <person name="Clifton S.W."/>
            <person name="Latreille P."/>
            <person name="Porwollik S."/>
            <person name="Sabo A."/>
            <person name="Meyer R."/>
            <person name="Bieri T."/>
            <person name="Ozersky P."/>
            <person name="McLellan M."/>
            <person name="Harkins C.R."/>
            <person name="Wang C."/>
            <person name="Nguyen C."/>
            <person name="Berghoff A."/>
            <person name="Elliott G."/>
            <person name="Kohlberg S."/>
            <person name="Strong C."/>
            <person name="Du F."/>
            <person name="Carter J."/>
            <person name="Kremizki C."/>
            <person name="Layman D."/>
            <person name="Leonard S."/>
            <person name="Sun H."/>
            <person name="Fulton L."/>
            <person name="Nash W."/>
            <person name="Miner T."/>
            <person name="Minx P."/>
            <person name="Delehaunty K."/>
            <person name="Fronick C."/>
            <person name="Magrini V."/>
            <person name="Nhan M."/>
            <person name="Warren W."/>
            <person name="Florea L."/>
            <person name="Spieth J."/>
            <person name="Wilson R.K."/>
        </authorList>
    </citation>
    <scope>NUCLEOTIDE SEQUENCE [LARGE SCALE GENOMIC DNA]</scope>
    <source>
        <strain>ATCC 9150 / SARB42</strain>
    </source>
</reference>
<evidence type="ECO:0000255" key="1">
    <source>
        <dbReference type="HAMAP-Rule" id="MF_01558"/>
    </source>
</evidence>
<evidence type="ECO:0000255" key="2">
    <source>
        <dbReference type="PROSITE-ProRule" id="PRU01083"/>
    </source>
</evidence>
<dbReference type="EC" id="3.5.4.5" evidence="1"/>
<dbReference type="EMBL" id="CP000026">
    <property type="protein sequence ID" value="AAV76666.1"/>
    <property type="molecule type" value="Genomic_DNA"/>
</dbReference>
<dbReference type="RefSeq" id="WP_000553534.1">
    <property type="nucleotide sequence ID" value="NC_006511.1"/>
</dbReference>
<dbReference type="SMR" id="Q5PE68"/>
<dbReference type="KEGG" id="spt:SPA0668"/>
<dbReference type="HOGENOM" id="CLU_052424_0_0_6"/>
<dbReference type="Proteomes" id="UP000008185">
    <property type="component" value="Chromosome"/>
</dbReference>
<dbReference type="GO" id="GO:0005829">
    <property type="term" value="C:cytosol"/>
    <property type="evidence" value="ECO:0007669"/>
    <property type="project" value="TreeGrafter"/>
</dbReference>
<dbReference type="GO" id="GO:0004126">
    <property type="term" value="F:cytidine deaminase activity"/>
    <property type="evidence" value="ECO:0007669"/>
    <property type="project" value="UniProtKB-UniRule"/>
</dbReference>
<dbReference type="GO" id="GO:0042802">
    <property type="term" value="F:identical protein binding"/>
    <property type="evidence" value="ECO:0007669"/>
    <property type="project" value="UniProtKB-ARBA"/>
</dbReference>
<dbReference type="GO" id="GO:0008270">
    <property type="term" value="F:zinc ion binding"/>
    <property type="evidence" value="ECO:0007669"/>
    <property type="project" value="UniProtKB-UniRule"/>
</dbReference>
<dbReference type="GO" id="GO:0009972">
    <property type="term" value="P:cytidine deamination"/>
    <property type="evidence" value="ECO:0007669"/>
    <property type="project" value="InterPro"/>
</dbReference>
<dbReference type="CDD" id="cd01283">
    <property type="entry name" value="cytidine_deaminase"/>
    <property type="match status" value="2"/>
</dbReference>
<dbReference type="FunFam" id="3.40.140.10:FF:000006">
    <property type="entry name" value="Cytidine deaminase"/>
    <property type="match status" value="1"/>
</dbReference>
<dbReference type="FunFam" id="3.40.140.10:FF:000007">
    <property type="entry name" value="Cytidine deaminase"/>
    <property type="match status" value="1"/>
</dbReference>
<dbReference type="Gene3D" id="3.40.140.10">
    <property type="entry name" value="Cytidine Deaminase, domain 2"/>
    <property type="match status" value="2"/>
</dbReference>
<dbReference type="HAMAP" id="MF_01558">
    <property type="entry name" value="Cyt_deam"/>
    <property type="match status" value="1"/>
</dbReference>
<dbReference type="InterPro" id="IPR016192">
    <property type="entry name" value="APOBEC/CMP_deaminase_Zn-bd"/>
</dbReference>
<dbReference type="InterPro" id="IPR002125">
    <property type="entry name" value="CMP_dCMP_dom"/>
</dbReference>
<dbReference type="InterPro" id="IPR013171">
    <property type="entry name" value="Cyd/dCyd_deaminase_Zn-bd"/>
</dbReference>
<dbReference type="InterPro" id="IPR050202">
    <property type="entry name" value="Cyt/Deoxycyt_deaminase"/>
</dbReference>
<dbReference type="InterPro" id="IPR006263">
    <property type="entry name" value="Cyt_deam_dimer"/>
</dbReference>
<dbReference type="InterPro" id="IPR016193">
    <property type="entry name" value="Cytidine_deaminase-like"/>
</dbReference>
<dbReference type="InterPro" id="IPR020797">
    <property type="entry name" value="Cytidine_deaminase_bacteria"/>
</dbReference>
<dbReference type="NCBIfam" id="TIGR01355">
    <property type="entry name" value="cyt_deam_dimer"/>
    <property type="match status" value="1"/>
</dbReference>
<dbReference type="NCBIfam" id="NF006537">
    <property type="entry name" value="PRK09027.1"/>
    <property type="match status" value="1"/>
</dbReference>
<dbReference type="PANTHER" id="PTHR11644">
    <property type="entry name" value="CYTIDINE DEAMINASE"/>
    <property type="match status" value="1"/>
</dbReference>
<dbReference type="PANTHER" id="PTHR11644:SF2">
    <property type="entry name" value="CYTIDINE DEAMINASE"/>
    <property type="match status" value="1"/>
</dbReference>
<dbReference type="Pfam" id="PF00383">
    <property type="entry name" value="dCMP_cyt_deam_1"/>
    <property type="match status" value="1"/>
</dbReference>
<dbReference type="Pfam" id="PF08211">
    <property type="entry name" value="dCMP_cyt_deam_2"/>
    <property type="match status" value="1"/>
</dbReference>
<dbReference type="PIRSF" id="PIRSF006334">
    <property type="entry name" value="Cdd_plus_pseudo"/>
    <property type="match status" value="1"/>
</dbReference>
<dbReference type="SUPFAM" id="SSF53927">
    <property type="entry name" value="Cytidine deaminase-like"/>
    <property type="match status" value="2"/>
</dbReference>
<dbReference type="PROSITE" id="PS00903">
    <property type="entry name" value="CYT_DCMP_DEAMINASES_1"/>
    <property type="match status" value="1"/>
</dbReference>
<dbReference type="PROSITE" id="PS51747">
    <property type="entry name" value="CYT_DCMP_DEAMINASES_2"/>
    <property type="match status" value="2"/>
</dbReference>
<proteinExistence type="inferred from homology"/>
<sequence length="294" mass="31718">MHPRFQTAFAQLADNLQSALAPILADHHFPAMLTAEQVSTLKNTARLDEDALAFALLPLAAACARTDLSHFNVGAIARGVSGNWYFGANMEFLGATMQQTVHAEQSAISHAWLRGEKGLAAVTVNYTPCGHCRQFMNELNSGLDLRIHLPGRAPHTLRDYLPDAFGPKDLEIKTLLMDEQDHGFTLTGDTLTQAAITAANKSHMPYSHSPSGVALECKDGRIFTGSYAENAAFNPTLPPLQGALNLLSLNGYDYADIQRAILAEKGDAALIQWDATAATLKALGCHNIDRVLLG</sequence>
<keyword id="KW-0378">Hydrolase</keyword>
<keyword id="KW-0479">Metal-binding</keyword>
<keyword id="KW-0862">Zinc</keyword>
<gene>
    <name evidence="1" type="primary">cdd</name>
    <name type="ordered locus">SPA0668</name>
</gene>
<accession>Q5PE68</accession>
<feature type="chain" id="PRO_0000171661" description="Cytidine deaminase">
    <location>
        <begin position="1"/>
        <end position="294"/>
    </location>
</feature>
<feature type="domain" description="CMP/dCMP-type deaminase 1" evidence="2">
    <location>
        <begin position="48"/>
        <end position="168"/>
    </location>
</feature>
<feature type="domain" description="CMP/dCMP-type deaminase 2" evidence="2">
    <location>
        <begin position="186"/>
        <end position="294"/>
    </location>
</feature>
<feature type="active site" description="Proton donor" evidence="1">
    <location>
        <position position="104"/>
    </location>
</feature>
<feature type="binding site" evidence="1">
    <location>
        <begin position="89"/>
        <end position="91"/>
    </location>
    <ligand>
        <name>substrate</name>
    </ligand>
</feature>
<feature type="binding site" evidence="1">
    <location>
        <position position="102"/>
    </location>
    <ligand>
        <name>Zn(2+)</name>
        <dbReference type="ChEBI" id="CHEBI:29105"/>
        <note>catalytic</note>
    </ligand>
</feature>
<feature type="binding site" evidence="1">
    <location>
        <position position="129"/>
    </location>
    <ligand>
        <name>Zn(2+)</name>
        <dbReference type="ChEBI" id="CHEBI:29105"/>
        <note>catalytic</note>
    </ligand>
</feature>
<feature type="binding site" evidence="1">
    <location>
        <position position="132"/>
    </location>
    <ligand>
        <name>Zn(2+)</name>
        <dbReference type="ChEBI" id="CHEBI:29105"/>
        <note>catalytic</note>
    </ligand>
</feature>
<name>CDD_SALPA</name>